<gene>
    <name evidence="7" type="primary">Garin5a</name>
    <name evidence="7" type="synonym">Fam71e1</name>
    <name evidence="5" type="synonym">Garil5</name>
</gene>
<name>GAR5A_MOUSE</name>
<protein>
    <recommendedName>
        <fullName evidence="7">Golgi-associated RAB2 interactor protein 5A</fullName>
    </recommendedName>
    <alternativeName>
        <fullName evidence="5">Golgi-associated RAB2B interactor-like 5</fullName>
        <shortName evidence="5">GARIL5</shortName>
    </alternativeName>
</protein>
<dbReference type="EMBL" id="AC149607">
    <property type="status" value="NOT_ANNOTATED_CDS"/>
    <property type="molecule type" value="Genomic_DNA"/>
</dbReference>
<dbReference type="EMBL" id="BC049752">
    <property type="protein sequence ID" value="AAH49752.1"/>
    <property type="molecule type" value="mRNA"/>
</dbReference>
<dbReference type="EMBL" id="BC130017">
    <property type="protein sequence ID" value="AAI30018.1"/>
    <property type="molecule type" value="mRNA"/>
</dbReference>
<dbReference type="CCDS" id="CCDS52232.1">
    <molecule id="A1L3C1-1"/>
</dbReference>
<dbReference type="RefSeq" id="NP_001344579.1">
    <molecule id="A1L3C1-2"/>
    <property type="nucleotide sequence ID" value="NM_001357650.2"/>
</dbReference>
<dbReference type="RefSeq" id="NP_082445.1">
    <molecule id="A1L3C1-1"/>
    <property type="nucleotide sequence ID" value="NM_028169.2"/>
</dbReference>
<dbReference type="RefSeq" id="XP_006541312.1">
    <property type="nucleotide sequence ID" value="XM_006541249.1"/>
</dbReference>
<dbReference type="FunCoup" id="A1L3C1">
    <property type="interactions" value="161"/>
</dbReference>
<dbReference type="STRING" id="10090.ENSMUSP00000103560"/>
<dbReference type="PhosphoSitePlus" id="A1L3C1"/>
<dbReference type="PaxDb" id="10090-ENSMUSP00000103560"/>
<dbReference type="ProteomicsDB" id="271837">
    <molecule id="A1L3C1-1"/>
</dbReference>
<dbReference type="Antibodypedia" id="68558">
    <property type="antibodies" value="1 antibodies from 1 providers"/>
</dbReference>
<dbReference type="Ensembl" id="ENSMUST00000107927.5">
    <molecule id="A1L3C1-1"/>
    <property type="protein sequence ID" value="ENSMUSP00000103560.4"/>
    <property type="gene ID" value="ENSMUSG00000051113.10"/>
</dbReference>
<dbReference type="GeneID" id="75538"/>
<dbReference type="KEGG" id="mmu:75538"/>
<dbReference type="UCSC" id="uc009gpr.2">
    <molecule id="A1L3C1-1"/>
    <property type="organism name" value="mouse"/>
</dbReference>
<dbReference type="AGR" id="MGI:1922788"/>
<dbReference type="CTD" id="112703"/>
<dbReference type="MGI" id="MGI:1922788">
    <property type="gene designation" value="Garin5a"/>
</dbReference>
<dbReference type="VEuPathDB" id="HostDB:ENSMUSG00000051113"/>
<dbReference type="eggNOG" id="ENOG502S585">
    <property type="taxonomic scope" value="Eukaryota"/>
</dbReference>
<dbReference type="GeneTree" id="ENSGT00940000162319"/>
<dbReference type="HOGENOM" id="CLU_100265_1_0_1"/>
<dbReference type="InParanoid" id="A1L3C1"/>
<dbReference type="OMA" id="VQFCPHI"/>
<dbReference type="OrthoDB" id="9940031at2759"/>
<dbReference type="PhylomeDB" id="A1L3C1"/>
<dbReference type="TreeFam" id="TF336050"/>
<dbReference type="BioGRID-ORCS" id="75538">
    <property type="hits" value="1 hit in 79 CRISPR screens"/>
</dbReference>
<dbReference type="ChiTaRS" id="Fam71e1">
    <property type="organism name" value="mouse"/>
</dbReference>
<dbReference type="PRO" id="PR:A1L3C1"/>
<dbReference type="Proteomes" id="UP000000589">
    <property type="component" value="Chromosome 7"/>
</dbReference>
<dbReference type="RNAct" id="A1L3C1">
    <property type="molecule type" value="protein"/>
</dbReference>
<dbReference type="Bgee" id="ENSMUSG00000051113">
    <property type="expression patterns" value="Expressed in seminiferous tubule of testis and 79 other cell types or tissues"/>
</dbReference>
<dbReference type="ExpressionAtlas" id="A1L3C1">
    <property type="expression patterns" value="baseline and differential"/>
</dbReference>
<dbReference type="GO" id="GO:0005794">
    <property type="term" value="C:Golgi apparatus"/>
    <property type="evidence" value="ECO:0000314"/>
    <property type="project" value="UniProtKB"/>
</dbReference>
<dbReference type="GO" id="GO:0061827">
    <property type="term" value="C:sperm head"/>
    <property type="evidence" value="ECO:0000315"/>
    <property type="project" value="MGI"/>
</dbReference>
<dbReference type="GO" id="GO:0000902">
    <property type="term" value="P:cell morphogenesis"/>
    <property type="evidence" value="ECO:0000315"/>
    <property type="project" value="MGI"/>
</dbReference>
<dbReference type="GO" id="GO:0051607">
    <property type="term" value="P:defense response to virus"/>
    <property type="evidence" value="ECO:0000314"/>
    <property type="project" value="UniProtKB"/>
</dbReference>
<dbReference type="GO" id="GO:0030317">
    <property type="term" value="P:flagellated sperm motility"/>
    <property type="evidence" value="ECO:0000315"/>
    <property type="project" value="MGI"/>
</dbReference>
<dbReference type="GO" id="GO:0045087">
    <property type="term" value="P:innate immune response"/>
    <property type="evidence" value="ECO:0000314"/>
    <property type="project" value="UniProtKB"/>
</dbReference>
<dbReference type="GO" id="GO:0007341">
    <property type="term" value="P:penetration of zona pellucida"/>
    <property type="evidence" value="ECO:0000315"/>
    <property type="project" value="MGI"/>
</dbReference>
<dbReference type="GO" id="GO:0032481">
    <property type="term" value="P:positive regulation of type I interferon production"/>
    <property type="evidence" value="ECO:0000314"/>
    <property type="project" value="UniProtKB"/>
</dbReference>
<dbReference type="GO" id="GO:0007338">
    <property type="term" value="P:single fertilization"/>
    <property type="evidence" value="ECO:0000315"/>
    <property type="project" value="MGI"/>
</dbReference>
<dbReference type="GO" id="GO:0007286">
    <property type="term" value="P:spermatid development"/>
    <property type="evidence" value="ECO:0000270"/>
    <property type="project" value="MGI"/>
</dbReference>
<dbReference type="InterPro" id="IPR022168">
    <property type="entry name" value="GARIL-like_Rab2B-bd"/>
</dbReference>
<dbReference type="PANTHER" id="PTHR22574">
    <property type="match status" value="1"/>
</dbReference>
<dbReference type="PANTHER" id="PTHR22574:SF5">
    <property type="entry name" value="GOLGI-ASSOCIATED RAB2 INTERACTOR PROTEIN 5A"/>
    <property type="match status" value="1"/>
</dbReference>
<dbReference type="Pfam" id="PF12480">
    <property type="entry name" value="GARIL_Rab2_bd"/>
    <property type="match status" value="1"/>
</dbReference>
<sequence>MKGGRDLKAARGGADRPLAPAYAPCRPGRLQRHLLSGEFDQLRDFPIFESNFVQVTRFGEVANKVTMGVAASSPALELPDLLLLAGPDKENGHLQLLGLFPLQFVQLFVHDESRQQLKVKFRTGRAFYLQLRSPPETRDCEFGRWVRLLYRLRFHSPTCAVPFTHEDTAPEEEEEEEEEEEEEEVKEGQLQPPEFQATEARLDPQVSELWGL</sequence>
<keyword id="KW-0025">Alternative splicing</keyword>
<keyword id="KW-0333">Golgi apparatus</keyword>
<keyword id="KW-1185">Reference proteome</keyword>
<proteinExistence type="evidence at protein level"/>
<feature type="chain" id="PRO_0000334698" description="Golgi-associated RAB2 interactor protein 5A">
    <location>
        <begin position="1"/>
        <end position="212"/>
    </location>
</feature>
<feature type="region of interest" description="Disordered" evidence="1">
    <location>
        <begin position="1"/>
        <end position="21"/>
    </location>
</feature>
<feature type="region of interest" description="Disordered" evidence="1">
    <location>
        <begin position="162"/>
        <end position="212"/>
    </location>
</feature>
<feature type="compositionally biased region" description="Acidic residues" evidence="1">
    <location>
        <begin position="169"/>
        <end position="185"/>
    </location>
</feature>
<feature type="splice variant" id="VSP_033761" description="In isoform 2." evidence="4">
    <location>
        <begin position="1"/>
        <end position="66"/>
    </location>
</feature>
<feature type="sequence conflict" description="In Ref. 2; AAI30018." evidence="6" ref="2">
    <original>R</original>
    <variation>L</variation>
    <location>
        <position position="138"/>
    </location>
</feature>
<evidence type="ECO:0000256" key="1">
    <source>
        <dbReference type="SAM" id="MobiDB-lite"/>
    </source>
</evidence>
<evidence type="ECO:0000269" key="2">
    <source>
    </source>
</evidence>
<evidence type="ECO:0000269" key="3">
    <source>
    </source>
</evidence>
<evidence type="ECO:0000303" key="4">
    <source>
    </source>
</evidence>
<evidence type="ECO:0000303" key="5">
    <source>
    </source>
</evidence>
<evidence type="ECO:0000305" key="6"/>
<evidence type="ECO:0000312" key="7">
    <source>
        <dbReference type="MGI" id="MGI:1922788"/>
    </source>
</evidence>
<organism>
    <name type="scientific">Mus musculus</name>
    <name type="common">Mouse</name>
    <dbReference type="NCBI Taxonomy" id="10090"/>
    <lineage>
        <taxon>Eukaryota</taxon>
        <taxon>Metazoa</taxon>
        <taxon>Chordata</taxon>
        <taxon>Craniata</taxon>
        <taxon>Vertebrata</taxon>
        <taxon>Euteleostomi</taxon>
        <taxon>Mammalia</taxon>
        <taxon>Eutheria</taxon>
        <taxon>Euarchontoglires</taxon>
        <taxon>Glires</taxon>
        <taxon>Rodentia</taxon>
        <taxon>Myomorpha</taxon>
        <taxon>Muroidea</taxon>
        <taxon>Muridae</taxon>
        <taxon>Murinae</taxon>
        <taxon>Mus</taxon>
        <taxon>Mus</taxon>
    </lineage>
</organism>
<reference key="1">
    <citation type="journal article" date="2009" name="PLoS Biol.">
        <title>Lineage-specific biology revealed by a finished genome assembly of the mouse.</title>
        <authorList>
            <person name="Church D.M."/>
            <person name="Goodstadt L."/>
            <person name="Hillier L.W."/>
            <person name="Zody M.C."/>
            <person name="Goldstein S."/>
            <person name="She X."/>
            <person name="Bult C.J."/>
            <person name="Agarwala R."/>
            <person name="Cherry J.L."/>
            <person name="DiCuccio M."/>
            <person name="Hlavina W."/>
            <person name="Kapustin Y."/>
            <person name="Meric P."/>
            <person name="Maglott D."/>
            <person name="Birtle Z."/>
            <person name="Marques A.C."/>
            <person name="Graves T."/>
            <person name="Zhou S."/>
            <person name="Teague B."/>
            <person name="Potamousis K."/>
            <person name="Churas C."/>
            <person name="Place M."/>
            <person name="Herschleb J."/>
            <person name="Runnheim R."/>
            <person name="Forrest D."/>
            <person name="Amos-Landgraf J."/>
            <person name="Schwartz D.C."/>
            <person name="Cheng Z."/>
            <person name="Lindblad-Toh K."/>
            <person name="Eichler E.E."/>
            <person name="Ponting C.P."/>
        </authorList>
    </citation>
    <scope>NUCLEOTIDE SEQUENCE [LARGE SCALE GENOMIC DNA]</scope>
    <source>
        <strain>C57BL/6J</strain>
    </source>
</reference>
<reference key="2">
    <citation type="journal article" date="2004" name="Genome Res.">
        <title>The status, quality, and expansion of the NIH full-length cDNA project: the Mammalian Gene Collection (MGC).</title>
        <authorList>
            <consortium name="The MGC Project Team"/>
        </authorList>
    </citation>
    <scope>NUCLEOTIDE SEQUENCE [LARGE SCALE MRNA] (ISOFORMS 1 AND 2)</scope>
    <source>
        <tissue>Testis</tissue>
    </source>
</reference>
<reference key="3">
    <citation type="journal article" date="2017" name="Cell Rep.">
        <title>The RAB2B-GARIL5 Complex Promotes Cytosolic DNA-Induced Innate Immune Responses.</title>
        <authorList>
            <person name="Takahama M."/>
            <person name="Fukuda M."/>
            <person name="Ohbayashi N."/>
            <person name="Kozaki T."/>
            <person name="Misawa T."/>
            <person name="Okamoto T."/>
            <person name="Matsuura Y."/>
            <person name="Akira S."/>
            <person name="Saitoh T."/>
        </authorList>
    </citation>
    <scope>FUNCTION</scope>
    <scope>INTERACTION WITH RAB2B</scope>
    <scope>SUBCELLULAR LOCATION</scope>
</reference>
<reference key="4">
    <citation type="journal article" date="2017" name="PLoS ONE">
        <title>Expression of uncharacterized male germ cell-specific genes and discovery of novel sperm-tail proteins in mice.</title>
        <authorList>
            <person name="Kwon J.T."/>
            <person name="Ham S."/>
            <person name="Jeon S."/>
            <person name="Kim Y."/>
            <person name="Oh S."/>
            <person name="Cho C."/>
        </authorList>
    </citation>
    <scope>DEVELOPMENTAL STAGE</scope>
    <scope>TISSUE SPECIFICITY</scope>
</reference>
<comment type="function">
    <text evidence="3">RAB2B effector protein which promotes cytosolic DNA-induced innate immune responses. Regulates IFN responses against DNA viruses by regulating the CGAS-STING signaling axis.</text>
</comment>
<comment type="subunit">
    <text evidence="3">Interacts (via N-terminus) with RAB2B (in GTP-bound form).</text>
</comment>
<comment type="subcellular location">
    <subcellularLocation>
        <location evidence="3">Golgi apparatus</location>
    </subcellularLocation>
</comment>
<comment type="alternative products">
    <event type="alternative splicing"/>
    <isoform>
        <id>A1L3C1-1</id>
        <name>1</name>
        <sequence type="displayed"/>
    </isoform>
    <isoform>
        <id>A1L3C1-2</id>
        <name>2</name>
        <sequence type="described" ref="VSP_033761"/>
    </isoform>
</comment>
<comment type="tissue specificity">
    <text evidence="2">Expressed in testis (at protein level).</text>
</comment>
<comment type="developmental stage">
    <text evidence="2">Detected in testis at 28 days after birth and expression is maintained (PubMed:28742876). Expressed by testicular cells and testicular sperm but not mature sperm (PubMed:28742876).</text>
</comment>
<comment type="similarity">
    <text evidence="6">Belongs to the GARIN family.</text>
</comment>
<accession>A1L3C1</accession>
<accession>E9QKI6</accession>
<accession>Q0P5X9</accession>